<name>Y887_THISH</name>
<accession>B8GNB7</accession>
<gene>
    <name type="ordered locus">Tgr7_0887</name>
</gene>
<keyword id="KW-1185">Reference proteome</keyword>
<evidence type="ECO:0000255" key="1">
    <source>
        <dbReference type="HAMAP-Rule" id="MF_00676"/>
    </source>
</evidence>
<dbReference type="EMBL" id="CP001339">
    <property type="protein sequence ID" value="ACL71978.1"/>
    <property type="molecule type" value="Genomic_DNA"/>
</dbReference>
<dbReference type="RefSeq" id="WP_012637466.1">
    <property type="nucleotide sequence ID" value="NC_011901.1"/>
</dbReference>
<dbReference type="STRING" id="396588.Tgr7_0887"/>
<dbReference type="KEGG" id="tgr:Tgr7_0887"/>
<dbReference type="eggNOG" id="COG2983">
    <property type="taxonomic scope" value="Bacteria"/>
</dbReference>
<dbReference type="HOGENOM" id="CLU_109769_0_1_6"/>
<dbReference type="OrthoDB" id="9786855at2"/>
<dbReference type="Proteomes" id="UP000002383">
    <property type="component" value="Chromosome"/>
</dbReference>
<dbReference type="HAMAP" id="MF_00676">
    <property type="entry name" value="UPF0260"/>
    <property type="match status" value="1"/>
</dbReference>
<dbReference type="InterPro" id="IPR005358">
    <property type="entry name" value="Puta_zinc/iron-chelating_dom"/>
</dbReference>
<dbReference type="InterPro" id="IPR008228">
    <property type="entry name" value="UCP006173"/>
</dbReference>
<dbReference type="NCBIfam" id="NF003501">
    <property type="entry name" value="PRK05170.1-5"/>
    <property type="match status" value="1"/>
</dbReference>
<dbReference type="NCBIfam" id="NF003507">
    <property type="entry name" value="PRK05170.2-5"/>
    <property type="match status" value="1"/>
</dbReference>
<dbReference type="PANTHER" id="PTHR37421">
    <property type="entry name" value="UPF0260 PROTEIN YCGN"/>
    <property type="match status" value="1"/>
</dbReference>
<dbReference type="PANTHER" id="PTHR37421:SF1">
    <property type="entry name" value="UPF0260 PROTEIN YCGN"/>
    <property type="match status" value="1"/>
</dbReference>
<dbReference type="Pfam" id="PF03692">
    <property type="entry name" value="CxxCxxCC"/>
    <property type="match status" value="1"/>
</dbReference>
<dbReference type="PIRSF" id="PIRSF006173">
    <property type="entry name" value="UCP006173"/>
    <property type="match status" value="1"/>
</dbReference>
<proteinExistence type="inferred from homology"/>
<protein>
    <recommendedName>
        <fullName evidence="1">UPF0260 protein Tgr7_0887</fullName>
    </recommendedName>
</protein>
<comment type="similarity">
    <text evidence="1">Belongs to the UPF0260 family.</text>
</comment>
<feature type="chain" id="PRO_1000147704" description="UPF0260 protein Tgr7_0887">
    <location>
        <begin position="1"/>
        <end position="150"/>
    </location>
</feature>
<organism>
    <name type="scientific">Thioalkalivibrio sulfidiphilus (strain HL-EbGR7)</name>
    <dbReference type="NCBI Taxonomy" id="396588"/>
    <lineage>
        <taxon>Bacteria</taxon>
        <taxon>Pseudomonadati</taxon>
        <taxon>Pseudomonadota</taxon>
        <taxon>Gammaproteobacteria</taxon>
        <taxon>Chromatiales</taxon>
        <taxon>Ectothiorhodospiraceae</taxon>
        <taxon>Thioalkalivibrio</taxon>
    </lineage>
</organism>
<reference key="1">
    <citation type="journal article" date="2011" name="Stand. Genomic Sci.">
        <title>Complete genome sequence of 'Thioalkalivibrio sulfidophilus' HL-EbGr7.</title>
        <authorList>
            <person name="Muyzer G."/>
            <person name="Sorokin D.Y."/>
            <person name="Mavromatis K."/>
            <person name="Lapidus A."/>
            <person name="Clum A."/>
            <person name="Ivanova N."/>
            <person name="Pati A."/>
            <person name="d'Haeseleer P."/>
            <person name="Woyke T."/>
            <person name="Kyrpides N.C."/>
        </authorList>
    </citation>
    <scope>NUCLEOTIDE SEQUENCE [LARGE SCALE GENOMIC DNA]</scope>
    <source>
        <strain>HL-EbGR7</strain>
    </source>
</reference>
<sequence length="150" mass="16699">MSQGSAPFWETTPLAQMSQAQWESLCDGCGRCCLHKLEDEDTGEIYHTAVACRLLDLETCRCSDYAHRKQRVPDCIQLTPADIPAFHWLPPSCAYRRVAEGRGLAPWHPLVSGDPDSVHRAGVSVRGRVVSEDEGDPLETRIVVWPGRDV</sequence>